<evidence type="ECO:0000250" key="1"/>
<evidence type="ECO:0000255" key="2">
    <source>
        <dbReference type="HAMAP-Rule" id="MF_00403"/>
    </source>
</evidence>
<evidence type="ECO:0000256" key="3">
    <source>
        <dbReference type="SAM" id="MobiDB-lite"/>
    </source>
</evidence>
<evidence type="ECO:0000305" key="4"/>
<protein>
    <recommendedName>
        <fullName evidence="2">Small ribosomal subunit protein uS12</fullName>
    </recommendedName>
    <alternativeName>
        <fullName evidence="4">30S ribosomal protein S12</fullName>
    </alternativeName>
</protein>
<proteinExistence type="inferred from homology"/>
<gene>
    <name evidence="2" type="primary">rpsL</name>
    <name type="ordered locus">Kole_1907</name>
</gene>
<name>RS12_KOSOT</name>
<accession>C5CGR9</accession>
<organism>
    <name type="scientific">Kosmotoga olearia (strain ATCC BAA-1733 / DSM 21960 / TBF 19.5.1)</name>
    <dbReference type="NCBI Taxonomy" id="521045"/>
    <lineage>
        <taxon>Bacteria</taxon>
        <taxon>Thermotogati</taxon>
        <taxon>Thermotogota</taxon>
        <taxon>Thermotogae</taxon>
        <taxon>Kosmotogales</taxon>
        <taxon>Kosmotogaceae</taxon>
        <taxon>Kosmotoga</taxon>
    </lineage>
</organism>
<dbReference type="EMBL" id="CP001634">
    <property type="protein sequence ID" value="ACR80588.1"/>
    <property type="molecule type" value="Genomic_DNA"/>
</dbReference>
<dbReference type="RefSeq" id="WP_015869231.1">
    <property type="nucleotide sequence ID" value="NC_012785.1"/>
</dbReference>
<dbReference type="SMR" id="C5CGR9"/>
<dbReference type="STRING" id="521045.Kole_1907"/>
<dbReference type="KEGG" id="kol:Kole_1907"/>
<dbReference type="eggNOG" id="COG0048">
    <property type="taxonomic scope" value="Bacteria"/>
</dbReference>
<dbReference type="HOGENOM" id="CLU_104295_1_2_0"/>
<dbReference type="OrthoDB" id="9802366at2"/>
<dbReference type="Proteomes" id="UP000002382">
    <property type="component" value="Chromosome"/>
</dbReference>
<dbReference type="GO" id="GO:0015935">
    <property type="term" value="C:small ribosomal subunit"/>
    <property type="evidence" value="ECO:0007669"/>
    <property type="project" value="InterPro"/>
</dbReference>
<dbReference type="GO" id="GO:0019843">
    <property type="term" value="F:rRNA binding"/>
    <property type="evidence" value="ECO:0007669"/>
    <property type="project" value="UniProtKB-UniRule"/>
</dbReference>
<dbReference type="GO" id="GO:0003735">
    <property type="term" value="F:structural constituent of ribosome"/>
    <property type="evidence" value="ECO:0007669"/>
    <property type="project" value="InterPro"/>
</dbReference>
<dbReference type="GO" id="GO:0000049">
    <property type="term" value="F:tRNA binding"/>
    <property type="evidence" value="ECO:0007669"/>
    <property type="project" value="UniProtKB-UniRule"/>
</dbReference>
<dbReference type="GO" id="GO:0006412">
    <property type="term" value="P:translation"/>
    <property type="evidence" value="ECO:0007669"/>
    <property type="project" value="UniProtKB-UniRule"/>
</dbReference>
<dbReference type="CDD" id="cd03368">
    <property type="entry name" value="Ribosomal_S12"/>
    <property type="match status" value="1"/>
</dbReference>
<dbReference type="FunFam" id="2.40.50.140:FF:000001">
    <property type="entry name" value="30S ribosomal protein S12"/>
    <property type="match status" value="1"/>
</dbReference>
<dbReference type="Gene3D" id="2.40.50.140">
    <property type="entry name" value="Nucleic acid-binding proteins"/>
    <property type="match status" value="1"/>
</dbReference>
<dbReference type="HAMAP" id="MF_00403_B">
    <property type="entry name" value="Ribosomal_uS12_B"/>
    <property type="match status" value="1"/>
</dbReference>
<dbReference type="InterPro" id="IPR012340">
    <property type="entry name" value="NA-bd_OB-fold"/>
</dbReference>
<dbReference type="InterPro" id="IPR006032">
    <property type="entry name" value="Ribosomal_uS12"/>
</dbReference>
<dbReference type="InterPro" id="IPR005679">
    <property type="entry name" value="Ribosomal_uS12_bac"/>
</dbReference>
<dbReference type="NCBIfam" id="TIGR00981">
    <property type="entry name" value="rpsL_bact"/>
    <property type="match status" value="1"/>
</dbReference>
<dbReference type="PANTHER" id="PTHR11652">
    <property type="entry name" value="30S RIBOSOMAL PROTEIN S12 FAMILY MEMBER"/>
    <property type="match status" value="1"/>
</dbReference>
<dbReference type="Pfam" id="PF00164">
    <property type="entry name" value="Ribosom_S12_S23"/>
    <property type="match status" value="1"/>
</dbReference>
<dbReference type="PIRSF" id="PIRSF002133">
    <property type="entry name" value="Ribosomal_S12/S23"/>
    <property type="match status" value="1"/>
</dbReference>
<dbReference type="PRINTS" id="PR01034">
    <property type="entry name" value="RIBOSOMALS12"/>
</dbReference>
<dbReference type="SUPFAM" id="SSF50249">
    <property type="entry name" value="Nucleic acid-binding proteins"/>
    <property type="match status" value="1"/>
</dbReference>
<dbReference type="PROSITE" id="PS00055">
    <property type="entry name" value="RIBOSOMAL_S12"/>
    <property type="match status" value="1"/>
</dbReference>
<keyword id="KW-0488">Methylation</keyword>
<keyword id="KW-1185">Reference proteome</keyword>
<keyword id="KW-0687">Ribonucleoprotein</keyword>
<keyword id="KW-0689">Ribosomal protein</keyword>
<keyword id="KW-0694">RNA-binding</keyword>
<keyword id="KW-0699">rRNA-binding</keyword>
<keyword id="KW-0820">tRNA-binding</keyword>
<comment type="function">
    <text evidence="2">With S4 and S5 plays an important role in translational accuracy.</text>
</comment>
<comment type="function">
    <text evidence="2">Interacts with and stabilizes bases of the 16S rRNA that are involved in tRNA selection in the A site and with the mRNA backbone. Located at the interface of the 30S and 50S subunits, it traverses the body of the 30S subunit contacting proteins on the other side and probably holding the rRNA structure together. The combined cluster of proteins S8, S12 and S17 appears to hold together the shoulder and platform of the 30S subunit.</text>
</comment>
<comment type="subunit">
    <text evidence="2">Part of the 30S ribosomal subunit. Contacts proteins S8 and S17. May interact with IF1 in the 30S initiation complex.</text>
</comment>
<comment type="similarity">
    <text evidence="2">Belongs to the universal ribosomal protein uS12 family.</text>
</comment>
<sequence>MPTINQLIRHGRKRLKKKSKSPALENNPQKRGVCVRVSTMTPKKPNSALRKIARVRLSNGTEVTAYIPGEGHNLQEHSVVLVRGGRVKDLPGVRYKIIRGALDAEGVANRRQSRSRYGAKKPKK</sequence>
<feature type="chain" id="PRO_1000205919" description="Small ribosomal subunit protein uS12">
    <location>
        <begin position="1"/>
        <end position="124"/>
    </location>
</feature>
<feature type="region of interest" description="Disordered" evidence="3">
    <location>
        <begin position="11"/>
        <end position="30"/>
    </location>
</feature>
<feature type="region of interest" description="Disordered" evidence="3">
    <location>
        <begin position="105"/>
        <end position="124"/>
    </location>
</feature>
<feature type="compositionally biased region" description="Basic residues" evidence="3">
    <location>
        <begin position="11"/>
        <end position="20"/>
    </location>
</feature>
<feature type="compositionally biased region" description="Basic residues" evidence="3">
    <location>
        <begin position="111"/>
        <end position="124"/>
    </location>
</feature>
<feature type="modified residue" description="3-methylthioaspartic acid" evidence="1">
    <location>
        <position position="89"/>
    </location>
</feature>
<reference key="1">
    <citation type="submission" date="2009-06" db="EMBL/GenBank/DDBJ databases">
        <title>Complete sequence of Thermotogales bacterium TBF 19.5.1.</title>
        <authorList>
            <consortium name="US DOE Joint Genome Institute"/>
            <person name="Lucas S."/>
            <person name="Copeland A."/>
            <person name="Lapidus A."/>
            <person name="Glavina del Rio T."/>
            <person name="Tice H."/>
            <person name="Bruce D."/>
            <person name="Goodwin L."/>
            <person name="Pitluck S."/>
            <person name="Chertkov O."/>
            <person name="Brettin T."/>
            <person name="Detter J.C."/>
            <person name="Han C."/>
            <person name="Schmutz J."/>
            <person name="Larimer F."/>
            <person name="Land M."/>
            <person name="Hauser L."/>
            <person name="Kyrpides N."/>
            <person name="Ovchinnikova G."/>
            <person name="Noll K."/>
        </authorList>
    </citation>
    <scope>NUCLEOTIDE SEQUENCE [LARGE SCALE GENOMIC DNA]</scope>
    <source>
        <strain>ATCC BAA-1733 / DSM 21960 / TBF 19.5.1</strain>
    </source>
</reference>